<keyword id="KW-0903">Direct protein sequencing</keyword>
<reference evidence="3" key="1">
    <citation type="journal article" date="2002" name="Proteomics">
        <title>High pressure effects step-wise altered protein expression in Lactobacillus sanfranciscensis.</title>
        <authorList>
            <person name="Drews O."/>
            <person name="Weiss W."/>
            <person name="Reil G."/>
            <person name="Parlar H."/>
            <person name="Wait R."/>
            <person name="Goerg A."/>
        </authorList>
    </citation>
    <scope>PROTEIN SEQUENCE</scope>
    <scope>INDUCTION</scope>
    <source>
        <strain evidence="1">ATCC 27651 / DSM 20451 / JCM 5668 / KCTC 3205 / NCIMB 702811 / NRRL B-3934 / L-12</strain>
    </source>
</reference>
<accession>P83535</accession>
<comment type="induction">
    <text evidence="1">By elevated hydrostatic pressure.</text>
</comment>
<comment type="miscellaneous">
    <text evidence="1">On the 2D-gel the determined MW of this unknown protein is: 65 kDa.</text>
</comment>
<protein>
    <recommendedName>
        <fullName>Unknown protein 10 from 2D-PAGE</fullName>
    </recommendedName>
</protein>
<name>UP10_FRUSA</name>
<sequence>SGADTTFLTK</sequence>
<feature type="chain" id="PRO_0000285981" description="Unknown protein 10 from 2D-PAGE">
    <location>
        <begin position="1" status="less than"/>
        <end position="10" status="greater than"/>
    </location>
</feature>
<feature type="non-terminal residue" evidence="2">
    <location>
        <position position="1"/>
    </location>
</feature>
<feature type="non-terminal residue" evidence="2">
    <location>
        <position position="10"/>
    </location>
</feature>
<proteinExistence type="evidence at protein level"/>
<evidence type="ECO:0000269" key="1">
    <source>
    </source>
</evidence>
<evidence type="ECO:0000303" key="2">
    <source>
    </source>
</evidence>
<evidence type="ECO:0000305" key="3"/>
<organism>
    <name type="scientific">Fructilactobacillus sanfranciscensis</name>
    <name type="common">Lactobacillus sanfranciscensis</name>
    <dbReference type="NCBI Taxonomy" id="1625"/>
    <lineage>
        <taxon>Bacteria</taxon>
        <taxon>Bacillati</taxon>
        <taxon>Bacillota</taxon>
        <taxon>Bacilli</taxon>
        <taxon>Lactobacillales</taxon>
        <taxon>Lactobacillaceae</taxon>
        <taxon>Fructilactobacillus</taxon>
    </lineage>
</organism>